<proteinExistence type="inferred from homology"/>
<sequence length="352" mass="39644">MAIYLDKLKMPIIIGLIVLIIASLTGYYYYTHNTKTSEIIIFAAGSLKIPLDEIASKYSEKYGVNIYIEASGSVEAIRKVTDLGREADIIAVADYRLIPTFLVPNYTSWYIGFATNQVVLVYTDKSKYHEILENNPSEWYKILMRNDVKWGFSDPNKDPCGYRSVGIIGLASIYYNDTSILENLLLNKTNIAVEKVNDTLNLIVPADLKVSENSNLIIRSKSVDLISLVEAGTIDYAFEYQSVAVQHHLKYIKLPDQINLGNPKYAYFYGKVIVKILVGTDKEKSIAMSPIIYGITVLDNAPHRSEALKFLKFLLGNTGREIFEEKGQPYLDEFIVYGKIPEELRSIAGSES</sequence>
<feature type="signal peptide" evidence="1">
    <location>
        <begin position="1"/>
        <end position="22"/>
    </location>
</feature>
<feature type="chain" id="PRO_0000334997" description="Uncharacterized solute-binding protein Smar_0280">
    <location>
        <begin position="23"/>
        <end position="352"/>
    </location>
</feature>
<dbReference type="EMBL" id="CP000575">
    <property type="protein sequence ID" value="ABN69393.1"/>
    <property type="molecule type" value="Genomic_DNA"/>
</dbReference>
<dbReference type="SMR" id="A3DL83"/>
<dbReference type="STRING" id="399550.Smar_0280"/>
<dbReference type="KEGG" id="smr:Smar_0280"/>
<dbReference type="eggNOG" id="arCOG00219">
    <property type="taxonomic scope" value="Archaea"/>
</dbReference>
<dbReference type="HOGENOM" id="CLU_055936_0_0_2"/>
<dbReference type="OrthoDB" id="7820at2157"/>
<dbReference type="Proteomes" id="UP000000254">
    <property type="component" value="Chromosome"/>
</dbReference>
<dbReference type="GO" id="GO:0030973">
    <property type="term" value="F:molybdate ion binding"/>
    <property type="evidence" value="ECO:0007669"/>
    <property type="project" value="TreeGrafter"/>
</dbReference>
<dbReference type="GO" id="GO:1901359">
    <property type="term" value="F:tungstate binding"/>
    <property type="evidence" value="ECO:0007669"/>
    <property type="project" value="InterPro"/>
</dbReference>
<dbReference type="GO" id="GO:0015689">
    <property type="term" value="P:molybdate ion transport"/>
    <property type="evidence" value="ECO:0007669"/>
    <property type="project" value="TreeGrafter"/>
</dbReference>
<dbReference type="CDD" id="cd13540">
    <property type="entry name" value="PBP2_ModA_WtpA"/>
    <property type="match status" value="1"/>
</dbReference>
<dbReference type="Gene3D" id="3.40.190.10">
    <property type="entry name" value="Periplasmic binding protein-like II"/>
    <property type="match status" value="2"/>
</dbReference>
<dbReference type="InterPro" id="IPR022498">
    <property type="entry name" value="ABC_trnspt_W-bd_WtpA"/>
</dbReference>
<dbReference type="InterPro" id="IPR050682">
    <property type="entry name" value="ModA/WtpA"/>
</dbReference>
<dbReference type="NCBIfam" id="NF003196">
    <property type="entry name" value="PRK04168.1"/>
    <property type="match status" value="1"/>
</dbReference>
<dbReference type="NCBIfam" id="TIGR03730">
    <property type="entry name" value="tungstate_WtpA"/>
    <property type="match status" value="1"/>
</dbReference>
<dbReference type="PANTHER" id="PTHR30632">
    <property type="entry name" value="MOLYBDATE-BINDING PERIPLASMIC PROTEIN"/>
    <property type="match status" value="1"/>
</dbReference>
<dbReference type="PANTHER" id="PTHR30632:SF16">
    <property type="entry name" value="MOLYBDATE_TUNGSTATE-BINDING PROTEIN WTPA"/>
    <property type="match status" value="1"/>
</dbReference>
<dbReference type="Pfam" id="PF13531">
    <property type="entry name" value="SBP_bac_11"/>
    <property type="match status" value="1"/>
</dbReference>
<dbReference type="SUPFAM" id="SSF53850">
    <property type="entry name" value="Periplasmic binding protein-like II"/>
    <property type="match status" value="1"/>
</dbReference>
<gene>
    <name type="ordered locus">Smar_0280</name>
</gene>
<evidence type="ECO:0000255" key="1"/>
<evidence type="ECO:0000305" key="2"/>
<organism>
    <name type="scientific">Staphylothermus marinus (strain ATCC 43588 / DSM 3639 / JCM 9404 / F1)</name>
    <dbReference type="NCBI Taxonomy" id="399550"/>
    <lineage>
        <taxon>Archaea</taxon>
        <taxon>Thermoproteota</taxon>
        <taxon>Thermoprotei</taxon>
        <taxon>Desulfurococcales</taxon>
        <taxon>Desulfurococcaceae</taxon>
        <taxon>Staphylothermus</taxon>
    </lineage>
</organism>
<protein>
    <recommendedName>
        <fullName>Uncharacterized solute-binding protein Smar_0280</fullName>
    </recommendedName>
</protein>
<accession>A3DL83</accession>
<comment type="similarity">
    <text evidence="2">Belongs to the bacterial solute-binding protein 1 family. WtpA subfamily.</text>
</comment>
<reference key="1">
    <citation type="journal article" date="2009" name="BMC Genomics">
        <title>The complete genome sequence of Staphylothermus marinus reveals differences in sulfur metabolism among heterotrophic Crenarchaeota.</title>
        <authorList>
            <person name="Anderson I.J."/>
            <person name="Dharmarajan L."/>
            <person name="Rodriguez J."/>
            <person name="Hooper S."/>
            <person name="Porat I."/>
            <person name="Ulrich L.E."/>
            <person name="Elkins J.G."/>
            <person name="Mavromatis K."/>
            <person name="Sun H."/>
            <person name="Land M."/>
            <person name="Lapidus A."/>
            <person name="Lucas S."/>
            <person name="Barry K."/>
            <person name="Huber H."/>
            <person name="Zhulin I.B."/>
            <person name="Whitman W.B."/>
            <person name="Mukhopadhyay B."/>
            <person name="Woese C."/>
            <person name="Bristow J."/>
            <person name="Kyrpides N."/>
        </authorList>
    </citation>
    <scope>NUCLEOTIDE SEQUENCE [LARGE SCALE GENOMIC DNA]</scope>
    <source>
        <strain>ATCC 43588 / DSM 3639 / JCM 9404 / F1</strain>
    </source>
</reference>
<reference key="2">
    <citation type="journal article" date="2009" name="Stand. Genomic Sci.">
        <title>Complete genome sequence of Staphylothermus marinus Stetter and Fiala 1986 type strain F1.</title>
        <authorList>
            <person name="Anderson I.J."/>
            <person name="Sun H."/>
            <person name="Lapidus A."/>
            <person name="Copeland A."/>
            <person name="Glavina Del Rio T."/>
            <person name="Tice H."/>
            <person name="Dalin E."/>
            <person name="Lucas S."/>
            <person name="Barry K."/>
            <person name="Land M."/>
            <person name="Richardson P."/>
            <person name="Huber H."/>
            <person name="Kyrpides N.C."/>
        </authorList>
    </citation>
    <scope>NUCLEOTIDE SEQUENCE [LARGE SCALE GENOMIC DNA]</scope>
    <source>
        <strain>ATCC 43588 / DSM 3639 / JCM 9404 / F1</strain>
    </source>
</reference>
<name>Y280_STAMF</name>
<keyword id="KW-1185">Reference proteome</keyword>
<keyword id="KW-0732">Signal</keyword>